<proteinExistence type="inferred from homology"/>
<comment type="similarity">
    <text evidence="1">Belongs to the YobF/DUF2527 family.</text>
</comment>
<keyword id="KW-1185">Reference proteome</keyword>
<organism>
    <name type="scientific">Escherichia coli O157:H7</name>
    <dbReference type="NCBI Taxonomy" id="83334"/>
    <lineage>
        <taxon>Bacteria</taxon>
        <taxon>Pseudomonadati</taxon>
        <taxon>Pseudomonadota</taxon>
        <taxon>Gammaproteobacteria</taxon>
        <taxon>Enterobacterales</taxon>
        <taxon>Enterobacteriaceae</taxon>
        <taxon>Escherichia</taxon>
    </lineage>
</organism>
<name>YOBF_ECO57</name>
<dbReference type="EMBL" id="AE005174">
    <property type="protein sequence ID" value="AAG56813.1"/>
    <property type="molecule type" value="Genomic_DNA"/>
</dbReference>
<dbReference type="EMBL" id="BA000007">
    <property type="protein sequence ID" value="BAB35957.1"/>
    <property type="molecule type" value="Genomic_DNA"/>
</dbReference>
<dbReference type="PIR" id="A85794">
    <property type="entry name" value="A85794"/>
</dbReference>
<dbReference type="PIR" id="F90945">
    <property type="entry name" value="F90945"/>
</dbReference>
<dbReference type="RefSeq" id="NP_310561.1">
    <property type="nucleotide sequence ID" value="NC_002695.1"/>
</dbReference>
<dbReference type="RefSeq" id="WP_001295496.1">
    <property type="nucleotide sequence ID" value="NZ_VOAI01000010.1"/>
</dbReference>
<dbReference type="STRING" id="155864.Z2869"/>
<dbReference type="KEGG" id="ece:Z2869"/>
<dbReference type="PATRIC" id="fig|386585.9.peg.2656"/>
<dbReference type="eggNOG" id="ENOG5033HS0">
    <property type="taxonomic scope" value="Bacteria"/>
</dbReference>
<dbReference type="HOGENOM" id="CLU_216752_0_0_6"/>
<dbReference type="Proteomes" id="UP000000558">
    <property type="component" value="Chromosome"/>
</dbReference>
<dbReference type="Proteomes" id="UP000002519">
    <property type="component" value="Chromosome"/>
</dbReference>
<dbReference type="InterPro" id="IPR019672">
    <property type="entry name" value="DUF2527"/>
</dbReference>
<dbReference type="Pfam" id="PF10736">
    <property type="entry name" value="DUF2527"/>
    <property type="match status" value="1"/>
</dbReference>
<evidence type="ECO:0000305" key="1"/>
<feature type="chain" id="PRO_0000169063" description="Protein YobF">
    <location>
        <begin position="1"/>
        <end position="47"/>
    </location>
</feature>
<sequence>MCGIFSKEVLSKHVDVEYRFSAEPYIGASCSNVSVLSMLCLRAKKTI</sequence>
<gene>
    <name type="primary">yobF</name>
    <name type="ordered locus">Z2869</name>
    <name type="ordered locus">ECs2534</name>
</gene>
<accession>P64510</accession>
<accession>P76265</accession>
<protein>
    <recommendedName>
        <fullName>Protein YobF</fullName>
    </recommendedName>
</protein>
<reference key="1">
    <citation type="journal article" date="2001" name="Nature">
        <title>Genome sequence of enterohaemorrhagic Escherichia coli O157:H7.</title>
        <authorList>
            <person name="Perna N.T."/>
            <person name="Plunkett G. III"/>
            <person name="Burland V."/>
            <person name="Mau B."/>
            <person name="Glasner J.D."/>
            <person name="Rose D.J."/>
            <person name="Mayhew G.F."/>
            <person name="Evans P.S."/>
            <person name="Gregor J."/>
            <person name="Kirkpatrick H.A."/>
            <person name="Posfai G."/>
            <person name="Hackett J."/>
            <person name="Klink S."/>
            <person name="Boutin A."/>
            <person name="Shao Y."/>
            <person name="Miller L."/>
            <person name="Grotbeck E.J."/>
            <person name="Davis N.W."/>
            <person name="Lim A."/>
            <person name="Dimalanta E.T."/>
            <person name="Potamousis K."/>
            <person name="Apodaca J."/>
            <person name="Anantharaman T.S."/>
            <person name="Lin J."/>
            <person name="Yen G."/>
            <person name="Schwartz D.C."/>
            <person name="Welch R.A."/>
            <person name="Blattner F.R."/>
        </authorList>
    </citation>
    <scope>NUCLEOTIDE SEQUENCE [LARGE SCALE GENOMIC DNA]</scope>
    <source>
        <strain>O157:H7 / EDL933 / ATCC 700927 / EHEC</strain>
    </source>
</reference>
<reference key="2">
    <citation type="journal article" date="2001" name="DNA Res.">
        <title>Complete genome sequence of enterohemorrhagic Escherichia coli O157:H7 and genomic comparison with a laboratory strain K-12.</title>
        <authorList>
            <person name="Hayashi T."/>
            <person name="Makino K."/>
            <person name="Ohnishi M."/>
            <person name="Kurokawa K."/>
            <person name="Ishii K."/>
            <person name="Yokoyama K."/>
            <person name="Han C.-G."/>
            <person name="Ohtsubo E."/>
            <person name="Nakayama K."/>
            <person name="Murata T."/>
            <person name="Tanaka M."/>
            <person name="Tobe T."/>
            <person name="Iida T."/>
            <person name="Takami H."/>
            <person name="Honda T."/>
            <person name="Sasakawa C."/>
            <person name="Ogasawara N."/>
            <person name="Yasunaga T."/>
            <person name="Kuhara S."/>
            <person name="Shiba T."/>
            <person name="Hattori M."/>
            <person name="Shinagawa H."/>
        </authorList>
    </citation>
    <scope>NUCLEOTIDE SEQUENCE [LARGE SCALE GENOMIC DNA]</scope>
    <source>
        <strain>O157:H7 / Sakai / RIMD 0509952 / EHEC</strain>
    </source>
</reference>